<proteinExistence type="inferred from homology"/>
<reference key="1">
    <citation type="submission" date="2007-06" db="EMBL/GenBank/DDBJ databases">
        <title>Complete sequence of chromosome of Staphylococcus aureus subsp. aureus JH1.</title>
        <authorList>
            <consortium name="US DOE Joint Genome Institute"/>
            <person name="Copeland A."/>
            <person name="Lucas S."/>
            <person name="Lapidus A."/>
            <person name="Barry K."/>
            <person name="Detter J.C."/>
            <person name="Glavina del Rio T."/>
            <person name="Hammon N."/>
            <person name="Israni S."/>
            <person name="Dalin E."/>
            <person name="Tice H."/>
            <person name="Pitluck S."/>
            <person name="Chain P."/>
            <person name="Malfatti S."/>
            <person name="Shin M."/>
            <person name="Vergez L."/>
            <person name="Schmutz J."/>
            <person name="Larimer F."/>
            <person name="Land M."/>
            <person name="Hauser L."/>
            <person name="Kyrpides N."/>
            <person name="Ivanova N."/>
            <person name="Tomasz A."/>
            <person name="Richardson P."/>
        </authorList>
    </citation>
    <scope>NUCLEOTIDE SEQUENCE [LARGE SCALE GENOMIC DNA]</scope>
    <source>
        <strain>JH1</strain>
    </source>
</reference>
<dbReference type="EMBL" id="CP000736">
    <property type="protein sequence ID" value="ABR52522.1"/>
    <property type="molecule type" value="Genomic_DNA"/>
</dbReference>
<dbReference type="SMR" id="A6U254"/>
<dbReference type="KEGG" id="sah:SaurJH1_1674"/>
<dbReference type="HOGENOM" id="CLU_050019_1_0_9"/>
<dbReference type="GO" id="GO:0003677">
    <property type="term" value="F:DNA binding"/>
    <property type="evidence" value="ECO:0007669"/>
    <property type="project" value="InterPro"/>
</dbReference>
<dbReference type="GO" id="GO:0045892">
    <property type="term" value="P:negative regulation of DNA-templated transcription"/>
    <property type="evidence" value="ECO:0007669"/>
    <property type="project" value="UniProtKB-UniRule"/>
</dbReference>
<dbReference type="FunFam" id="1.10.10.10:FF:000049">
    <property type="entry name" value="Heat-inducible transcription repressor HrcA"/>
    <property type="match status" value="1"/>
</dbReference>
<dbReference type="Gene3D" id="3.30.450.40">
    <property type="match status" value="1"/>
</dbReference>
<dbReference type="Gene3D" id="3.30.390.60">
    <property type="entry name" value="Heat-inducible transcription repressor hrca homolog, domain 3"/>
    <property type="match status" value="1"/>
</dbReference>
<dbReference type="Gene3D" id="1.10.10.10">
    <property type="entry name" value="Winged helix-like DNA-binding domain superfamily/Winged helix DNA-binding domain"/>
    <property type="match status" value="1"/>
</dbReference>
<dbReference type="HAMAP" id="MF_00081">
    <property type="entry name" value="HrcA"/>
    <property type="match status" value="1"/>
</dbReference>
<dbReference type="InterPro" id="IPR029016">
    <property type="entry name" value="GAF-like_dom_sf"/>
</dbReference>
<dbReference type="InterPro" id="IPR002571">
    <property type="entry name" value="HrcA"/>
</dbReference>
<dbReference type="InterPro" id="IPR021153">
    <property type="entry name" value="HrcA_C"/>
</dbReference>
<dbReference type="InterPro" id="IPR036388">
    <property type="entry name" value="WH-like_DNA-bd_sf"/>
</dbReference>
<dbReference type="InterPro" id="IPR036390">
    <property type="entry name" value="WH_DNA-bd_sf"/>
</dbReference>
<dbReference type="InterPro" id="IPR023120">
    <property type="entry name" value="WHTH_transcript_rep_HrcA_IDD"/>
</dbReference>
<dbReference type="NCBIfam" id="TIGR00331">
    <property type="entry name" value="hrcA"/>
    <property type="match status" value="1"/>
</dbReference>
<dbReference type="PANTHER" id="PTHR34824">
    <property type="entry name" value="HEAT-INDUCIBLE TRANSCRIPTION REPRESSOR HRCA"/>
    <property type="match status" value="1"/>
</dbReference>
<dbReference type="PANTHER" id="PTHR34824:SF1">
    <property type="entry name" value="HEAT-INDUCIBLE TRANSCRIPTION REPRESSOR HRCA"/>
    <property type="match status" value="1"/>
</dbReference>
<dbReference type="Pfam" id="PF01628">
    <property type="entry name" value="HrcA"/>
    <property type="match status" value="1"/>
</dbReference>
<dbReference type="PIRSF" id="PIRSF005485">
    <property type="entry name" value="HrcA"/>
    <property type="match status" value="1"/>
</dbReference>
<dbReference type="SUPFAM" id="SSF55781">
    <property type="entry name" value="GAF domain-like"/>
    <property type="match status" value="1"/>
</dbReference>
<dbReference type="SUPFAM" id="SSF46785">
    <property type="entry name" value="Winged helix' DNA-binding domain"/>
    <property type="match status" value="1"/>
</dbReference>
<name>HRCA_STAA2</name>
<comment type="function">
    <text evidence="1">Negative regulator of class I heat shock genes (grpE-dnaK-dnaJ and groELS operons). Prevents heat-shock induction of these operons.</text>
</comment>
<comment type="similarity">
    <text evidence="1">Belongs to the HrcA family.</text>
</comment>
<feature type="chain" id="PRO_1000075294" description="Heat-inducible transcription repressor HrcA">
    <location>
        <begin position="1"/>
        <end position="325"/>
    </location>
</feature>
<protein>
    <recommendedName>
        <fullName evidence="1">Heat-inducible transcription repressor HrcA</fullName>
    </recommendedName>
</protein>
<accession>A6U254</accession>
<organism>
    <name type="scientific">Staphylococcus aureus (strain JH1)</name>
    <dbReference type="NCBI Taxonomy" id="359787"/>
    <lineage>
        <taxon>Bacteria</taxon>
        <taxon>Bacillati</taxon>
        <taxon>Bacillota</taxon>
        <taxon>Bacilli</taxon>
        <taxon>Bacillales</taxon>
        <taxon>Staphylococcaceae</taxon>
        <taxon>Staphylococcus</taxon>
    </lineage>
</organism>
<evidence type="ECO:0000255" key="1">
    <source>
        <dbReference type="HAMAP-Rule" id="MF_00081"/>
    </source>
</evidence>
<keyword id="KW-0678">Repressor</keyword>
<keyword id="KW-0346">Stress response</keyword>
<keyword id="KW-0804">Transcription</keyword>
<keyword id="KW-0805">Transcription regulation</keyword>
<gene>
    <name evidence="1" type="primary">hrcA</name>
    <name type="ordered locus">SaurJH1_1674</name>
</gene>
<sequence>MITDRQLSILNAIVEDYVDFGQPVGSKTLIERHNLNVSPATIRNEMKQLEDLNYIEKTHSSSGRSPSQLGFRYYVNRLLEQTSHQKTNKLRRLNQLLVENQYDVSSALTYFADELSNISQYTTLVVHPNHKQDIINNVHLIRANPNLVIMVIVFSSGHVEHVHLASDIPFSNDKLNTISNFVTNKLTEFNQNLQDDIVSFVQSEQEEIFINKLINTMNNHISNQSNSIYMGGKVKLIDALNESNVSSIQPILQYIESNRIAELLQDISSPNINVKIGNEIDDSLSDISIVTSQYHFDETLKGQIAVIGPTAMHYQNVIQLLNRIW</sequence>